<reference key="1">
    <citation type="journal article" date="2006" name="BMC Genomics">
        <title>The genome of the square archaeon Haloquadratum walsbyi: life at the limits of water activity.</title>
        <authorList>
            <person name="Bolhuis H."/>
            <person name="Palm P."/>
            <person name="Wende A."/>
            <person name="Falb M."/>
            <person name="Rampp M."/>
            <person name="Rodriguez-Valera F."/>
            <person name="Pfeiffer F."/>
            <person name="Oesterhelt D."/>
        </authorList>
    </citation>
    <scope>NUCLEOTIDE SEQUENCE [LARGE SCALE GENOMIC DNA]</scope>
    <source>
        <strain>DSM 16790 / HBSQ001</strain>
    </source>
</reference>
<gene>
    <name evidence="1" type="primary">cmk</name>
    <name type="ordered locus">HQ_2765A</name>
</gene>
<accession>Q18GM4</accession>
<evidence type="ECO:0000255" key="1">
    <source>
        <dbReference type="HAMAP-Rule" id="MF_00239"/>
    </source>
</evidence>
<comment type="catalytic activity">
    <reaction evidence="1">
        <text>CMP + ATP = CDP + ADP</text>
        <dbReference type="Rhea" id="RHEA:11600"/>
        <dbReference type="ChEBI" id="CHEBI:30616"/>
        <dbReference type="ChEBI" id="CHEBI:58069"/>
        <dbReference type="ChEBI" id="CHEBI:60377"/>
        <dbReference type="ChEBI" id="CHEBI:456216"/>
        <dbReference type="EC" id="2.7.4.25"/>
    </reaction>
</comment>
<comment type="catalytic activity">
    <reaction evidence="1">
        <text>dCMP + ATP = dCDP + ADP</text>
        <dbReference type="Rhea" id="RHEA:25094"/>
        <dbReference type="ChEBI" id="CHEBI:30616"/>
        <dbReference type="ChEBI" id="CHEBI:57566"/>
        <dbReference type="ChEBI" id="CHEBI:58593"/>
        <dbReference type="ChEBI" id="CHEBI:456216"/>
        <dbReference type="EC" id="2.7.4.25"/>
    </reaction>
</comment>
<comment type="subcellular location">
    <subcellularLocation>
        <location evidence="1">Cytoplasm</location>
    </subcellularLocation>
</comment>
<comment type="similarity">
    <text evidence="1">Belongs to the cytidylate kinase family. Type 2 subfamily.</text>
</comment>
<name>KCY_HALWD</name>
<protein>
    <recommendedName>
        <fullName evidence="1">Cytidylate kinase</fullName>
        <shortName evidence="1">CK</shortName>
        <ecNumber evidence="1">2.7.4.25</ecNumber>
    </recommendedName>
    <alternativeName>
        <fullName evidence="1">Cytidine monophosphate kinase</fullName>
        <shortName evidence="1">CMP kinase</shortName>
    </alternativeName>
</protein>
<keyword id="KW-0067">ATP-binding</keyword>
<keyword id="KW-0963">Cytoplasm</keyword>
<keyword id="KW-0418">Kinase</keyword>
<keyword id="KW-0547">Nucleotide-binding</keyword>
<keyword id="KW-1185">Reference proteome</keyword>
<keyword id="KW-0808">Transferase</keyword>
<organism>
    <name type="scientific">Haloquadratum walsbyi (strain DSM 16790 / HBSQ001)</name>
    <dbReference type="NCBI Taxonomy" id="362976"/>
    <lineage>
        <taxon>Archaea</taxon>
        <taxon>Methanobacteriati</taxon>
        <taxon>Methanobacteriota</taxon>
        <taxon>Stenosarchaea group</taxon>
        <taxon>Halobacteria</taxon>
        <taxon>Halobacteriales</taxon>
        <taxon>Haloferacaceae</taxon>
        <taxon>Haloquadratum</taxon>
    </lineage>
</organism>
<dbReference type="EC" id="2.7.4.25" evidence="1"/>
<dbReference type="EMBL" id="AM180088">
    <property type="protein sequence ID" value="CAJ52873.1"/>
    <property type="molecule type" value="Genomic_DNA"/>
</dbReference>
<dbReference type="RefSeq" id="WP_011571987.1">
    <property type="nucleotide sequence ID" value="NC_008212.1"/>
</dbReference>
<dbReference type="SMR" id="Q18GM4"/>
<dbReference type="STRING" id="362976.HQ_2765A"/>
<dbReference type="GeneID" id="4193843"/>
<dbReference type="KEGG" id="hwa:HQ_2765A"/>
<dbReference type="eggNOG" id="arCOG01037">
    <property type="taxonomic scope" value="Archaea"/>
</dbReference>
<dbReference type="HOGENOM" id="CLU_079959_1_0_2"/>
<dbReference type="Proteomes" id="UP000001975">
    <property type="component" value="Chromosome"/>
</dbReference>
<dbReference type="GO" id="GO:0005737">
    <property type="term" value="C:cytoplasm"/>
    <property type="evidence" value="ECO:0007669"/>
    <property type="project" value="UniProtKB-SubCell"/>
</dbReference>
<dbReference type="GO" id="GO:0005524">
    <property type="term" value="F:ATP binding"/>
    <property type="evidence" value="ECO:0007669"/>
    <property type="project" value="UniProtKB-UniRule"/>
</dbReference>
<dbReference type="GO" id="GO:0036430">
    <property type="term" value="F:CMP kinase activity"/>
    <property type="evidence" value="ECO:0007669"/>
    <property type="project" value="RHEA"/>
</dbReference>
<dbReference type="GO" id="GO:0036431">
    <property type="term" value="F:dCMP kinase activity"/>
    <property type="evidence" value="ECO:0007669"/>
    <property type="project" value="RHEA"/>
</dbReference>
<dbReference type="GO" id="GO:0006220">
    <property type="term" value="P:pyrimidine nucleotide metabolic process"/>
    <property type="evidence" value="ECO:0007669"/>
    <property type="project" value="UniProtKB-UniRule"/>
</dbReference>
<dbReference type="Gene3D" id="3.40.50.300">
    <property type="entry name" value="P-loop containing nucleotide triphosphate hydrolases"/>
    <property type="match status" value="1"/>
</dbReference>
<dbReference type="HAMAP" id="MF_00239">
    <property type="entry name" value="Cytidyl_kinase_type2"/>
    <property type="match status" value="1"/>
</dbReference>
<dbReference type="InterPro" id="IPR011892">
    <property type="entry name" value="Cyt_kin_arch"/>
</dbReference>
<dbReference type="InterPro" id="IPR027417">
    <property type="entry name" value="P-loop_NTPase"/>
</dbReference>
<dbReference type="NCBIfam" id="TIGR02173">
    <property type="entry name" value="cyt_kin_arch"/>
    <property type="match status" value="1"/>
</dbReference>
<dbReference type="Pfam" id="PF13189">
    <property type="entry name" value="Cytidylate_kin2"/>
    <property type="match status" value="1"/>
</dbReference>
<dbReference type="SUPFAM" id="SSF52540">
    <property type="entry name" value="P-loop containing nucleoside triphosphate hydrolases"/>
    <property type="match status" value="1"/>
</dbReference>
<proteinExistence type="inferred from homology"/>
<sequence>MLLTVSGPPGAGKSTTADTLAATFGLEHVSGGDIFRELAAERGLTAVELNQQAEEDDQIDRDLDQRLRTIALERDDILLESRLAGWLAGDAADIRVWLDAPLNVRAGRIADREDKSISTAQEETRTREESEALRYQNYYNIDIHDHSIYDLRVNTARWPKTEVPDILEAAIAAYEPASDEGRFPIEDIIYDF</sequence>
<feature type="chain" id="PRO_1000005667" description="Cytidylate kinase">
    <location>
        <begin position="1"/>
        <end position="192"/>
    </location>
</feature>
<feature type="binding site" evidence="1">
    <location>
        <begin position="7"/>
        <end position="15"/>
    </location>
    <ligand>
        <name>ATP</name>
        <dbReference type="ChEBI" id="CHEBI:30616"/>
    </ligand>
</feature>